<gene>
    <name evidence="1" type="primary">rimM</name>
    <name type="ordered locus">RSc0934</name>
    <name type="ORF">RS04480</name>
</gene>
<dbReference type="EMBL" id="AL646052">
    <property type="protein sequence ID" value="CAD14636.1"/>
    <property type="molecule type" value="Genomic_DNA"/>
</dbReference>
<dbReference type="SMR" id="Q8Y0V9"/>
<dbReference type="STRING" id="267608.RSc0934"/>
<dbReference type="EnsemblBacteria" id="CAD14636">
    <property type="protein sequence ID" value="CAD14636"/>
    <property type="gene ID" value="RSc0934"/>
</dbReference>
<dbReference type="KEGG" id="rso:RSc0934"/>
<dbReference type="eggNOG" id="COG0806">
    <property type="taxonomic scope" value="Bacteria"/>
</dbReference>
<dbReference type="HOGENOM" id="CLU_077636_1_0_4"/>
<dbReference type="Proteomes" id="UP000001436">
    <property type="component" value="Chromosome"/>
</dbReference>
<dbReference type="GO" id="GO:0005737">
    <property type="term" value="C:cytoplasm"/>
    <property type="evidence" value="ECO:0007669"/>
    <property type="project" value="UniProtKB-SubCell"/>
</dbReference>
<dbReference type="GO" id="GO:0005840">
    <property type="term" value="C:ribosome"/>
    <property type="evidence" value="ECO:0007669"/>
    <property type="project" value="InterPro"/>
</dbReference>
<dbReference type="GO" id="GO:0043022">
    <property type="term" value="F:ribosome binding"/>
    <property type="evidence" value="ECO:0007669"/>
    <property type="project" value="InterPro"/>
</dbReference>
<dbReference type="GO" id="GO:0042274">
    <property type="term" value="P:ribosomal small subunit biogenesis"/>
    <property type="evidence" value="ECO:0007669"/>
    <property type="project" value="UniProtKB-UniRule"/>
</dbReference>
<dbReference type="GO" id="GO:0006364">
    <property type="term" value="P:rRNA processing"/>
    <property type="evidence" value="ECO:0007669"/>
    <property type="project" value="UniProtKB-UniRule"/>
</dbReference>
<dbReference type="Gene3D" id="2.30.30.240">
    <property type="entry name" value="PRC-barrel domain"/>
    <property type="match status" value="1"/>
</dbReference>
<dbReference type="Gene3D" id="2.40.30.60">
    <property type="entry name" value="RimM"/>
    <property type="match status" value="1"/>
</dbReference>
<dbReference type="HAMAP" id="MF_00014">
    <property type="entry name" value="Ribosome_mat_RimM"/>
    <property type="match status" value="1"/>
</dbReference>
<dbReference type="InterPro" id="IPR011033">
    <property type="entry name" value="PRC_barrel-like_sf"/>
</dbReference>
<dbReference type="InterPro" id="IPR056792">
    <property type="entry name" value="PRC_RimM"/>
</dbReference>
<dbReference type="InterPro" id="IPR011961">
    <property type="entry name" value="RimM"/>
</dbReference>
<dbReference type="InterPro" id="IPR002676">
    <property type="entry name" value="RimM_N"/>
</dbReference>
<dbReference type="InterPro" id="IPR036976">
    <property type="entry name" value="RimM_N_sf"/>
</dbReference>
<dbReference type="InterPro" id="IPR009000">
    <property type="entry name" value="Transl_B-barrel_sf"/>
</dbReference>
<dbReference type="NCBIfam" id="TIGR02273">
    <property type="entry name" value="16S_RimM"/>
    <property type="match status" value="1"/>
</dbReference>
<dbReference type="PANTHER" id="PTHR33692">
    <property type="entry name" value="RIBOSOME MATURATION FACTOR RIMM"/>
    <property type="match status" value="1"/>
</dbReference>
<dbReference type="PANTHER" id="PTHR33692:SF1">
    <property type="entry name" value="RIBOSOME MATURATION FACTOR RIMM"/>
    <property type="match status" value="1"/>
</dbReference>
<dbReference type="Pfam" id="PF24986">
    <property type="entry name" value="PRC_RimM"/>
    <property type="match status" value="1"/>
</dbReference>
<dbReference type="Pfam" id="PF01782">
    <property type="entry name" value="RimM"/>
    <property type="match status" value="1"/>
</dbReference>
<dbReference type="SUPFAM" id="SSF50346">
    <property type="entry name" value="PRC-barrel domain"/>
    <property type="match status" value="1"/>
</dbReference>
<dbReference type="SUPFAM" id="SSF50447">
    <property type="entry name" value="Translation proteins"/>
    <property type="match status" value="1"/>
</dbReference>
<sequence length="184" mass="19649">MRPGAGANPSLPDDLVEVGYVGGAYGVRGWIKVQPHGDAEALLHASTWWLKPAAGAPAVSSDWRVLPVGTSREHSGSVVAGSPAVPDRNVAEALRGCTVWVRRAEFPAPADDEFYWVDLIGSTVVNEQQETLGTVAGLIDNGAHQILRIVDEGGTERLVPFVEVYVKSVDVAGKHIVVDWGLDY</sequence>
<organism>
    <name type="scientific">Ralstonia nicotianae (strain ATCC BAA-1114 / GMI1000)</name>
    <name type="common">Ralstonia solanacearum</name>
    <dbReference type="NCBI Taxonomy" id="267608"/>
    <lineage>
        <taxon>Bacteria</taxon>
        <taxon>Pseudomonadati</taxon>
        <taxon>Pseudomonadota</taxon>
        <taxon>Betaproteobacteria</taxon>
        <taxon>Burkholderiales</taxon>
        <taxon>Burkholderiaceae</taxon>
        <taxon>Ralstonia</taxon>
        <taxon>Ralstonia solanacearum species complex</taxon>
    </lineage>
</organism>
<proteinExistence type="inferred from homology"/>
<accession>Q8Y0V9</accession>
<feature type="chain" id="PRO_0000163338" description="Ribosome maturation factor RimM">
    <location>
        <begin position="1"/>
        <end position="184"/>
    </location>
</feature>
<feature type="domain" description="PRC barrel" evidence="1">
    <location>
        <begin position="111"/>
        <end position="184"/>
    </location>
</feature>
<reference key="1">
    <citation type="journal article" date="2002" name="Nature">
        <title>Genome sequence of the plant pathogen Ralstonia solanacearum.</title>
        <authorList>
            <person name="Salanoubat M."/>
            <person name="Genin S."/>
            <person name="Artiguenave F."/>
            <person name="Gouzy J."/>
            <person name="Mangenot S."/>
            <person name="Arlat M."/>
            <person name="Billault A."/>
            <person name="Brottier P."/>
            <person name="Camus J.-C."/>
            <person name="Cattolico L."/>
            <person name="Chandler M."/>
            <person name="Choisne N."/>
            <person name="Claudel-Renard C."/>
            <person name="Cunnac S."/>
            <person name="Demange N."/>
            <person name="Gaspin C."/>
            <person name="Lavie M."/>
            <person name="Moisan A."/>
            <person name="Robert C."/>
            <person name="Saurin W."/>
            <person name="Schiex T."/>
            <person name="Siguier P."/>
            <person name="Thebault P."/>
            <person name="Whalen M."/>
            <person name="Wincker P."/>
            <person name="Levy M."/>
            <person name="Weissenbach J."/>
            <person name="Boucher C.A."/>
        </authorList>
    </citation>
    <scope>NUCLEOTIDE SEQUENCE [LARGE SCALE GENOMIC DNA]</scope>
    <source>
        <strain>ATCC BAA-1114 / GMI1000</strain>
    </source>
</reference>
<comment type="function">
    <text evidence="1">An accessory protein needed during the final step in the assembly of 30S ribosomal subunit, possibly for assembly of the head region. Essential for efficient processing of 16S rRNA. May be needed both before and after RbfA during the maturation of 16S rRNA. It has affinity for free ribosomal 30S subunits but not for 70S ribosomes.</text>
</comment>
<comment type="subunit">
    <text evidence="1">Binds ribosomal protein uS19.</text>
</comment>
<comment type="subcellular location">
    <subcellularLocation>
        <location evidence="1">Cytoplasm</location>
    </subcellularLocation>
</comment>
<comment type="domain">
    <text evidence="1">The PRC barrel domain binds ribosomal protein uS19.</text>
</comment>
<comment type="similarity">
    <text evidence="1">Belongs to the RimM family.</text>
</comment>
<keyword id="KW-0143">Chaperone</keyword>
<keyword id="KW-0963">Cytoplasm</keyword>
<keyword id="KW-1185">Reference proteome</keyword>
<keyword id="KW-0690">Ribosome biogenesis</keyword>
<keyword id="KW-0698">rRNA processing</keyword>
<evidence type="ECO:0000255" key="1">
    <source>
        <dbReference type="HAMAP-Rule" id="MF_00014"/>
    </source>
</evidence>
<name>RIMM_RALN1</name>
<protein>
    <recommendedName>
        <fullName evidence="1">Ribosome maturation factor RimM</fullName>
    </recommendedName>
</protein>